<feature type="chain" id="PRO_0000435939" description="Conidiophore development regulator abaA">
    <location>
        <begin position="1"/>
        <end position="792"/>
    </location>
</feature>
<feature type="DNA-binding region" description="TEA" evidence="3">
    <location>
        <begin position="127"/>
        <end position="201"/>
    </location>
</feature>
<feature type="region of interest" description="Disordered" evidence="4">
    <location>
        <begin position="61"/>
        <end position="134"/>
    </location>
</feature>
<feature type="region of interest" description="Disordered" evidence="4">
    <location>
        <begin position="213"/>
        <end position="272"/>
    </location>
</feature>
<feature type="region of interest" description="Disordered" evidence="4">
    <location>
        <begin position="708"/>
        <end position="732"/>
    </location>
</feature>
<feature type="region of interest" description="Disordered" evidence="4">
    <location>
        <begin position="767"/>
        <end position="792"/>
    </location>
</feature>
<feature type="compositionally biased region" description="Basic residues" evidence="4">
    <location>
        <begin position="83"/>
        <end position="94"/>
    </location>
</feature>
<feature type="compositionally biased region" description="Polar residues" evidence="4">
    <location>
        <begin position="97"/>
        <end position="111"/>
    </location>
</feature>
<feature type="compositionally biased region" description="Basic and acidic residues" evidence="4">
    <location>
        <begin position="114"/>
        <end position="131"/>
    </location>
</feature>
<feature type="compositionally biased region" description="Polar residues" evidence="4">
    <location>
        <begin position="236"/>
        <end position="246"/>
    </location>
</feature>
<gene>
    <name evidence="6" type="primary">abaA</name>
    <name type="ORF">PROQFM164_S01g000237</name>
</gene>
<accession>W6PQG8</accession>
<comment type="function">
    <text evidence="2">BrlA, abaA and wetA are pivotal regulators of conidiophore development and conidium maturation (By similarity). They act individually and together to regulate their own expression and that of numerous other sporulation-specific genes (By similarity). Binds to the sequence 5'-CATTCY-3', where Y is a pyrimidine, making both major- and minor-groove contacts (By similarity).</text>
</comment>
<comment type="subcellular location">
    <subcellularLocation>
        <location evidence="1">Nucleus</location>
    </subcellularLocation>
    <text evidence="1">localizes to the nuclei of phialides and terminal cells of mature conidia (By similarity).</text>
</comment>
<comment type="induction">
    <text evidence="5">Expression is positively regulated by pcz1 (PubMed:25811807).</text>
</comment>
<comment type="similarity">
    <text evidence="7">Belongs to the TEC1 family.</text>
</comment>
<name>ABAA_PENRF</name>
<organism>
    <name type="scientific">Penicillium roqueforti (strain FM164)</name>
    <dbReference type="NCBI Taxonomy" id="1365484"/>
    <lineage>
        <taxon>Eukaryota</taxon>
        <taxon>Fungi</taxon>
        <taxon>Dikarya</taxon>
        <taxon>Ascomycota</taxon>
        <taxon>Pezizomycotina</taxon>
        <taxon>Eurotiomycetes</taxon>
        <taxon>Eurotiomycetidae</taxon>
        <taxon>Eurotiales</taxon>
        <taxon>Aspergillaceae</taxon>
        <taxon>Penicillium</taxon>
    </lineage>
</organism>
<reference key="1">
    <citation type="journal article" date="2014" name="Nat. Commun.">
        <title>Multiple recent horizontal transfers of a large genomic region in cheese making fungi.</title>
        <authorList>
            <person name="Cheeseman K."/>
            <person name="Ropars J."/>
            <person name="Renault P."/>
            <person name="Dupont J."/>
            <person name="Gouzy J."/>
            <person name="Branca A."/>
            <person name="Abraham A.-L."/>
            <person name="Ceppi M."/>
            <person name="Conseiller E."/>
            <person name="Debuchy R."/>
            <person name="Malagnac F."/>
            <person name="Goarin A."/>
            <person name="Silar P."/>
            <person name="Lacoste S."/>
            <person name="Sallet E."/>
            <person name="Bensimon A."/>
            <person name="Giraud T."/>
            <person name="Brygoo Y."/>
        </authorList>
    </citation>
    <scope>NUCLEOTIDE SEQUENCE [LARGE SCALE GENOMIC DNA]</scope>
    <source>
        <strain>FM164</strain>
    </source>
</reference>
<reference key="2">
    <citation type="journal article" date="2015" name="PLoS ONE">
        <title>The pcz1 gene, which encodes a Zn(II)2Cys6 protein, is involved in the control of growth, conidiation, and conidial germination in the filamentous fungus Penicillium roqueforti.</title>
        <authorList>
            <person name="Gil-Duran C."/>
            <person name="Rojas-Aedo J.F."/>
            <person name="Medina E."/>
            <person name="Vaca I."/>
            <person name="Garcia-Rico R.O."/>
            <person name="Villagran S."/>
            <person name="Levican G."/>
            <person name="Chavez R."/>
        </authorList>
    </citation>
    <scope>INDUCTION</scope>
</reference>
<sequence length="792" mass="88118">MATDWQPECLVAQNQPSLDPVGAHSDRALQNTTGNVQSYSDQLAHAGVTARDDQFHQYSFKYPHGPHPQPLSAPGLHQQHVAARLHQRKLRRLHSVGPNSQSRRAQSSYLKSQKYMEYRRRPRRDTGKDGEPVWSDELEDAFQQALEANPPMGRRKWSERGKSYGRNELIAEYIFKLTGKRRTRKQVSSHLQVLDSFLKGDPDWERLVREPALERSSSVHGSAPAPKWRTAVEHPSGSSHYGSHTHPSYHDHMRSMQPYAGDLPPPHYTLGSNMQETAASTIHGFSFDMWVSAPQQANRIDKALHAYTRLQGDLHHPVAPPMPLEHVNGWRSSFPQLASMVDDVNNPLDCDIILLEVNLELMTDFPPTGSRLGIQLDLDYGHPSAGDVLGVSQMDNWTCSTHIYQDSQKLLETYHDLPKTQSTKVKPLFESSWWAKLFTQLTQEKRIAEDSGNPQAARDADDHARQFFRSLSAVQEIRATSPSSCRLSNQYQGHHGDESKRMAVLAWKFRQTRPGEVGTTTWRRLIPAPDRTTTNSPRPASAVDRVPLSLDSILLNKPSHQGIYQAPHPHDLIHHPSQSQSQWPMYQSPHDNVSNLYNPSGHLDFMSSISKAEDGLNDKIAVTSVLDSFSASLAPESISSTSLHGSSGAPVMLNVHDLPLTHPGMGYTMGHETSHYVPSQHHSVNMHDSNSVLHGFFGSHTQPLDDLSHGHGSWGTHSTSIPGDVGAGSYHIPYQAEHHGPVSRESQQPHQFDGLLPSEDLMDKIVGRMSNGSGMHGAGPDAGYDNATVDAV</sequence>
<protein>
    <recommendedName>
        <fullName evidence="7">Conidiophore development regulator abaA</fullName>
    </recommendedName>
</protein>
<keyword id="KW-0010">Activator</keyword>
<keyword id="KW-0183">Conidiation</keyword>
<keyword id="KW-0539">Nucleus</keyword>
<keyword id="KW-1185">Reference proteome</keyword>
<keyword id="KW-0749">Sporulation</keyword>
<keyword id="KW-0804">Transcription</keyword>
<keyword id="KW-0805">Transcription regulation</keyword>
<proteinExistence type="evidence at transcript level"/>
<evidence type="ECO:0000250" key="1">
    <source>
        <dbReference type="UniProtKB" id="I1S4T3"/>
    </source>
</evidence>
<evidence type="ECO:0000250" key="2">
    <source>
        <dbReference type="UniProtKB" id="P22022"/>
    </source>
</evidence>
<evidence type="ECO:0000255" key="3">
    <source>
        <dbReference type="PROSITE-ProRule" id="PRU00505"/>
    </source>
</evidence>
<evidence type="ECO:0000256" key="4">
    <source>
        <dbReference type="SAM" id="MobiDB-lite"/>
    </source>
</evidence>
<evidence type="ECO:0000269" key="5">
    <source>
    </source>
</evidence>
<evidence type="ECO:0000303" key="6">
    <source>
    </source>
</evidence>
<evidence type="ECO:0000305" key="7"/>
<dbReference type="EMBL" id="HG792015">
    <property type="protein sequence ID" value="CDM26428.1"/>
    <property type="molecule type" value="Genomic_DNA"/>
</dbReference>
<dbReference type="SMR" id="W6PQG8"/>
<dbReference type="STRING" id="1365484.W6PQG8"/>
<dbReference type="OMA" id="MWVSAPQ"/>
<dbReference type="OrthoDB" id="10006572at2759"/>
<dbReference type="Proteomes" id="UP000030686">
    <property type="component" value="Unassembled WGS sequence"/>
</dbReference>
<dbReference type="GO" id="GO:0005634">
    <property type="term" value="C:nucleus"/>
    <property type="evidence" value="ECO:0007669"/>
    <property type="project" value="UniProtKB-SubCell"/>
</dbReference>
<dbReference type="GO" id="GO:0005667">
    <property type="term" value="C:transcription regulator complex"/>
    <property type="evidence" value="ECO:0007669"/>
    <property type="project" value="TreeGrafter"/>
</dbReference>
<dbReference type="GO" id="GO:0000981">
    <property type="term" value="F:DNA-binding transcription factor activity, RNA polymerase II-specific"/>
    <property type="evidence" value="ECO:0007669"/>
    <property type="project" value="TreeGrafter"/>
</dbReference>
<dbReference type="GO" id="GO:0000978">
    <property type="term" value="F:RNA polymerase II cis-regulatory region sequence-specific DNA binding"/>
    <property type="evidence" value="ECO:0007669"/>
    <property type="project" value="TreeGrafter"/>
</dbReference>
<dbReference type="GO" id="GO:0048315">
    <property type="term" value="P:conidium formation"/>
    <property type="evidence" value="ECO:0007669"/>
    <property type="project" value="UniProtKB-KW"/>
</dbReference>
<dbReference type="GO" id="GO:0030435">
    <property type="term" value="P:sporulation resulting in formation of a cellular spore"/>
    <property type="evidence" value="ECO:0007669"/>
    <property type="project" value="UniProtKB-KW"/>
</dbReference>
<dbReference type="Gene3D" id="6.10.20.40">
    <property type="entry name" value="TEA/ATTS domain"/>
    <property type="match status" value="1"/>
</dbReference>
<dbReference type="InterPro" id="IPR000818">
    <property type="entry name" value="TEA/ATTS_dom"/>
</dbReference>
<dbReference type="InterPro" id="IPR038096">
    <property type="entry name" value="TEA/ATTS_sf"/>
</dbReference>
<dbReference type="InterPro" id="IPR050937">
    <property type="entry name" value="TEC1_TEAD_TF"/>
</dbReference>
<dbReference type="PANTHER" id="PTHR11834:SF0">
    <property type="entry name" value="PROTEIN SCALLOPED"/>
    <property type="match status" value="1"/>
</dbReference>
<dbReference type="PANTHER" id="PTHR11834">
    <property type="entry name" value="TRANSCRIPTIONAL ENHANCER FACTOR TEF RELATED"/>
    <property type="match status" value="1"/>
</dbReference>
<dbReference type="Pfam" id="PF01285">
    <property type="entry name" value="TEA"/>
    <property type="match status" value="1"/>
</dbReference>
<dbReference type="PRINTS" id="PR00065">
    <property type="entry name" value="TEADOMAIN"/>
</dbReference>
<dbReference type="SMART" id="SM00426">
    <property type="entry name" value="TEA"/>
    <property type="match status" value="1"/>
</dbReference>
<dbReference type="PROSITE" id="PS00554">
    <property type="entry name" value="TEA_1"/>
    <property type="match status" value="1"/>
</dbReference>
<dbReference type="PROSITE" id="PS51088">
    <property type="entry name" value="TEA_2"/>
    <property type="match status" value="1"/>
</dbReference>